<accession>Q8VWF6</accession>
<accession>Q9SJE4</accession>
<feature type="signal peptide" evidence="2">
    <location>
        <begin position="1"/>
        <end position="25"/>
    </location>
</feature>
<feature type="chain" id="PRO_0000431591" description="Protein STRICTOSIDINE SYNTHASE-LIKE 3" evidence="2">
    <location>
        <begin position="26"/>
        <end position="390"/>
    </location>
</feature>
<feature type="glycosylation site" description="N-linked (GlcNAc...) asparagine" evidence="3">
    <location>
        <position position="95"/>
    </location>
</feature>
<feature type="glycosylation site" description="N-linked (GlcNAc...) asparagine" evidence="3">
    <location>
        <position position="108"/>
    </location>
</feature>
<evidence type="ECO:0000250" key="1"/>
<evidence type="ECO:0000255" key="2"/>
<evidence type="ECO:0000255" key="3">
    <source>
        <dbReference type="PROSITE-ProRule" id="PRU00498"/>
    </source>
</evidence>
<evidence type="ECO:0000303" key="4">
    <source>
    </source>
</evidence>
<evidence type="ECO:0000303" key="5">
    <source>
    </source>
</evidence>
<evidence type="ECO:0000305" key="6"/>
<evidence type="ECO:0000312" key="7">
    <source>
        <dbReference type="Araport" id="AT1G08470"/>
    </source>
</evidence>
<evidence type="ECO:0000312" key="8">
    <source>
        <dbReference type="EMBL" id="AAF22901.1"/>
    </source>
</evidence>
<evidence type="ECO:0000312" key="9">
    <source>
        <dbReference type="EMBL" id="AAL36403.1"/>
    </source>
</evidence>
<protein>
    <recommendedName>
        <fullName evidence="4">Protein STRICTOSIDINE SYNTHASE-LIKE 3</fullName>
        <shortName evidence="4">AtSSL3</shortName>
    </recommendedName>
    <alternativeName>
        <fullName evidence="5">Strictosidine synthase 9</fullName>
        <shortName evidence="5">AtSS9</shortName>
    </alternativeName>
</protein>
<proteinExistence type="evidence at transcript level"/>
<organism evidence="9">
    <name type="scientific">Arabidopsis thaliana</name>
    <name type="common">Mouse-ear cress</name>
    <dbReference type="NCBI Taxonomy" id="3702"/>
    <lineage>
        <taxon>Eukaryota</taxon>
        <taxon>Viridiplantae</taxon>
        <taxon>Streptophyta</taxon>
        <taxon>Embryophyta</taxon>
        <taxon>Tracheophyta</taxon>
        <taxon>Spermatophyta</taxon>
        <taxon>Magnoliopsida</taxon>
        <taxon>eudicotyledons</taxon>
        <taxon>Gunneridae</taxon>
        <taxon>Pentapetalae</taxon>
        <taxon>rosids</taxon>
        <taxon>malvids</taxon>
        <taxon>Brassicales</taxon>
        <taxon>Brassicaceae</taxon>
        <taxon>Camelineae</taxon>
        <taxon>Arabidopsis</taxon>
    </lineage>
</organism>
<comment type="subcellular location">
    <subcellularLocation>
        <location evidence="1">Vacuole</location>
    </subcellularLocation>
</comment>
<comment type="similarity">
    <text evidence="6">Belongs to the strictosidine synthase family.</text>
</comment>
<comment type="sequence caution" evidence="6">
    <conflict type="erroneous gene model prediction">
        <sequence resource="EMBL-CDS" id="AAF22901"/>
    </conflict>
</comment>
<reference key="1">
    <citation type="journal article" date="2000" name="Nature">
        <title>Sequence and analysis of chromosome 1 of the plant Arabidopsis thaliana.</title>
        <authorList>
            <person name="Theologis A."/>
            <person name="Ecker J.R."/>
            <person name="Palm C.J."/>
            <person name="Federspiel N.A."/>
            <person name="Kaul S."/>
            <person name="White O."/>
            <person name="Alonso J."/>
            <person name="Altafi H."/>
            <person name="Araujo R."/>
            <person name="Bowman C.L."/>
            <person name="Brooks S.Y."/>
            <person name="Buehler E."/>
            <person name="Chan A."/>
            <person name="Chao Q."/>
            <person name="Chen H."/>
            <person name="Cheuk R.F."/>
            <person name="Chin C.W."/>
            <person name="Chung M.K."/>
            <person name="Conn L."/>
            <person name="Conway A.B."/>
            <person name="Conway A.R."/>
            <person name="Creasy T.H."/>
            <person name="Dewar K."/>
            <person name="Dunn P."/>
            <person name="Etgu P."/>
            <person name="Feldblyum T.V."/>
            <person name="Feng J.-D."/>
            <person name="Fong B."/>
            <person name="Fujii C.Y."/>
            <person name="Gill J.E."/>
            <person name="Goldsmith A.D."/>
            <person name="Haas B."/>
            <person name="Hansen N.F."/>
            <person name="Hughes B."/>
            <person name="Huizar L."/>
            <person name="Hunter J.L."/>
            <person name="Jenkins J."/>
            <person name="Johnson-Hopson C."/>
            <person name="Khan S."/>
            <person name="Khaykin E."/>
            <person name="Kim C.J."/>
            <person name="Koo H.L."/>
            <person name="Kremenetskaia I."/>
            <person name="Kurtz D.B."/>
            <person name="Kwan A."/>
            <person name="Lam B."/>
            <person name="Langin-Hooper S."/>
            <person name="Lee A."/>
            <person name="Lee J.M."/>
            <person name="Lenz C.A."/>
            <person name="Li J.H."/>
            <person name="Li Y.-P."/>
            <person name="Lin X."/>
            <person name="Liu S.X."/>
            <person name="Liu Z.A."/>
            <person name="Luros J.S."/>
            <person name="Maiti R."/>
            <person name="Marziali A."/>
            <person name="Militscher J."/>
            <person name="Miranda M."/>
            <person name="Nguyen M."/>
            <person name="Nierman W.C."/>
            <person name="Osborne B.I."/>
            <person name="Pai G."/>
            <person name="Peterson J."/>
            <person name="Pham P.K."/>
            <person name="Rizzo M."/>
            <person name="Rooney T."/>
            <person name="Rowley D."/>
            <person name="Sakano H."/>
            <person name="Salzberg S.L."/>
            <person name="Schwartz J.R."/>
            <person name="Shinn P."/>
            <person name="Southwick A.M."/>
            <person name="Sun H."/>
            <person name="Tallon L.J."/>
            <person name="Tambunga G."/>
            <person name="Toriumi M.J."/>
            <person name="Town C.D."/>
            <person name="Utterback T."/>
            <person name="Van Aken S."/>
            <person name="Vaysberg M."/>
            <person name="Vysotskaia V.S."/>
            <person name="Walker M."/>
            <person name="Wu D."/>
            <person name="Yu G."/>
            <person name="Fraser C.M."/>
            <person name="Venter J.C."/>
            <person name="Davis R.W."/>
        </authorList>
    </citation>
    <scope>NUCLEOTIDE SEQUENCE [LARGE SCALE GENOMIC DNA]</scope>
    <source>
        <strain>cv. Columbia</strain>
    </source>
</reference>
<reference key="2">
    <citation type="journal article" date="2017" name="Plant J.">
        <title>Araport11: a complete reannotation of the Arabidopsis thaliana reference genome.</title>
        <authorList>
            <person name="Cheng C.Y."/>
            <person name="Krishnakumar V."/>
            <person name="Chan A.P."/>
            <person name="Thibaud-Nissen F."/>
            <person name="Schobel S."/>
            <person name="Town C.D."/>
        </authorList>
    </citation>
    <scope>GENOME REANNOTATION</scope>
    <source>
        <strain>cv. Columbia</strain>
    </source>
</reference>
<reference key="3">
    <citation type="journal article" date="2003" name="Science">
        <title>Empirical analysis of transcriptional activity in the Arabidopsis genome.</title>
        <authorList>
            <person name="Yamada K."/>
            <person name="Lim J."/>
            <person name="Dale J.M."/>
            <person name="Chen H."/>
            <person name="Shinn P."/>
            <person name="Palm C.J."/>
            <person name="Southwick A.M."/>
            <person name="Wu H.C."/>
            <person name="Kim C.J."/>
            <person name="Nguyen M."/>
            <person name="Pham P.K."/>
            <person name="Cheuk R.F."/>
            <person name="Karlin-Newmann G."/>
            <person name="Liu S.X."/>
            <person name="Lam B."/>
            <person name="Sakano H."/>
            <person name="Wu T."/>
            <person name="Yu G."/>
            <person name="Miranda M."/>
            <person name="Quach H.L."/>
            <person name="Tripp M."/>
            <person name="Chang C.H."/>
            <person name="Lee J.M."/>
            <person name="Toriumi M.J."/>
            <person name="Chan M.M."/>
            <person name="Tang C.C."/>
            <person name="Onodera C.S."/>
            <person name="Deng J.M."/>
            <person name="Akiyama K."/>
            <person name="Ansari Y."/>
            <person name="Arakawa T."/>
            <person name="Banh J."/>
            <person name="Banno F."/>
            <person name="Bowser L."/>
            <person name="Brooks S.Y."/>
            <person name="Carninci P."/>
            <person name="Chao Q."/>
            <person name="Choy N."/>
            <person name="Enju A."/>
            <person name="Goldsmith A.D."/>
            <person name="Gurjal M."/>
            <person name="Hansen N.F."/>
            <person name="Hayashizaki Y."/>
            <person name="Johnson-Hopson C."/>
            <person name="Hsuan V.W."/>
            <person name="Iida K."/>
            <person name="Karnes M."/>
            <person name="Khan S."/>
            <person name="Koesema E."/>
            <person name="Ishida J."/>
            <person name="Jiang P.X."/>
            <person name="Jones T."/>
            <person name="Kawai J."/>
            <person name="Kamiya A."/>
            <person name="Meyers C."/>
            <person name="Nakajima M."/>
            <person name="Narusaka M."/>
            <person name="Seki M."/>
            <person name="Sakurai T."/>
            <person name="Satou M."/>
            <person name="Tamse R."/>
            <person name="Vaysberg M."/>
            <person name="Wallender E.K."/>
            <person name="Wong C."/>
            <person name="Yamamura Y."/>
            <person name="Yuan S."/>
            <person name="Shinozaki K."/>
            <person name="Davis R.W."/>
            <person name="Theologis A."/>
            <person name="Ecker J.R."/>
        </authorList>
    </citation>
    <scope>NUCLEOTIDE SEQUENCE [LARGE SCALE MRNA]</scope>
    <source>
        <strain>cv. Columbia</strain>
    </source>
</reference>
<reference key="4">
    <citation type="journal article" date="2000" name="Biochem. Biophys. Res. Commun.">
        <title>Animal and plant members of a gene family with similarity to alkaloid-synthesizing enzymes.</title>
        <authorList>
            <person name="Fabbri M."/>
            <person name="Delp G."/>
            <person name="Schmidt O."/>
            <person name="Theopold U."/>
        </authorList>
    </citation>
    <scope>GENE FAMILY</scope>
    <scope>NOMENCLATURE</scope>
</reference>
<reference key="5">
    <citation type="journal article" date="2009" name="Plant Biol.">
        <title>Phylogenetic and transcriptional analysis of a strictosidine synthase-like gene family in Arabidopsis thaliana reveals involvement in plant defence responses.</title>
        <authorList>
            <person name="Sohani M.M."/>
            <person name="Schenk P.M."/>
            <person name="Schultz C.J."/>
            <person name="Schmidt O."/>
        </authorList>
    </citation>
    <scope>GENE FAMILY</scope>
    <source>
        <strain>cv. Columbia</strain>
    </source>
</reference>
<dbReference type="EMBL" id="AC006932">
    <property type="protein sequence ID" value="AAF22901.1"/>
    <property type="status" value="ALT_SEQ"/>
    <property type="molecule type" value="Genomic_DNA"/>
</dbReference>
<dbReference type="EMBL" id="CP002684">
    <property type="protein sequence ID" value="AEE28296.1"/>
    <property type="molecule type" value="Genomic_DNA"/>
</dbReference>
<dbReference type="EMBL" id="AF419594">
    <property type="protein sequence ID" value="AAL31926.1"/>
    <property type="molecule type" value="mRNA"/>
</dbReference>
<dbReference type="EMBL" id="AY064047">
    <property type="protein sequence ID" value="AAL36403.1"/>
    <property type="molecule type" value="mRNA"/>
</dbReference>
<dbReference type="EMBL" id="AY117314">
    <property type="protein sequence ID" value="AAM51389.1"/>
    <property type="molecule type" value="mRNA"/>
</dbReference>
<dbReference type="PIR" id="H86217">
    <property type="entry name" value="H86217"/>
</dbReference>
<dbReference type="RefSeq" id="NP_563818.1">
    <property type="nucleotide sequence ID" value="NM_100720.3"/>
</dbReference>
<dbReference type="SMR" id="Q8VWF6"/>
<dbReference type="FunCoup" id="Q8VWF6">
    <property type="interactions" value="1995"/>
</dbReference>
<dbReference type="STRING" id="3702.Q8VWF6"/>
<dbReference type="GlyCosmos" id="Q8VWF6">
    <property type="glycosylation" value="2 sites, No reported glycans"/>
</dbReference>
<dbReference type="GlyGen" id="Q8VWF6">
    <property type="glycosylation" value="2 sites"/>
</dbReference>
<dbReference type="PaxDb" id="3702-AT1G08470.1"/>
<dbReference type="ProteomicsDB" id="245206"/>
<dbReference type="EnsemblPlants" id="AT1G08470.1">
    <property type="protein sequence ID" value="AT1G08470.1"/>
    <property type="gene ID" value="AT1G08470"/>
</dbReference>
<dbReference type="GeneID" id="837368"/>
<dbReference type="Gramene" id="AT1G08470.1">
    <property type="protein sequence ID" value="AT1G08470.1"/>
    <property type="gene ID" value="AT1G08470"/>
</dbReference>
<dbReference type="KEGG" id="ath:AT1G08470"/>
<dbReference type="Araport" id="AT1G08470"/>
<dbReference type="TAIR" id="AT1G08470">
    <property type="gene designation" value="SSL3"/>
</dbReference>
<dbReference type="eggNOG" id="KOG1520">
    <property type="taxonomic scope" value="Eukaryota"/>
</dbReference>
<dbReference type="HOGENOM" id="CLU_023267_2_0_1"/>
<dbReference type="InParanoid" id="Q8VWF6"/>
<dbReference type="OMA" id="FQRRKFM"/>
<dbReference type="PhylomeDB" id="Q8VWF6"/>
<dbReference type="PRO" id="PR:Q8VWF6"/>
<dbReference type="Proteomes" id="UP000006548">
    <property type="component" value="Chromosome 1"/>
</dbReference>
<dbReference type="ExpressionAtlas" id="Q8VWF6">
    <property type="expression patterns" value="baseline and differential"/>
</dbReference>
<dbReference type="GO" id="GO:0005783">
    <property type="term" value="C:endoplasmic reticulum"/>
    <property type="evidence" value="ECO:0007005"/>
    <property type="project" value="TAIR"/>
</dbReference>
<dbReference type="GO" id="GO:0000325">
    <property type="term" value="C:plant-type vacuole"/>
    <property type="evidence" value="ECO:0007005"/>
    <property type="project" value="TAIR"/>
</dbReference>
<dbReference type="FunFam" id="2.120.10.30:FF:000060">
    <property type="entry name" value="Putative strictosidine synthase"/>
    <property type="match status" value="1"/>
</dbReference>
<dbReference type="Gene3D" id="2.120.10.30">
    <property type="entry name" value="TolB, C-terminal domain"/>
    <property type="match status" value="1"/>
</dbReference>
<dbReference type="InterPro" id="IPR011042">
    <property type="entry name" value="6-blade_b-propeller_TolB-like"/>
</dbReference>
<dbReference type="InterPro" id="IPR018119">
    <property type="entry name" value="Strictosidine_synth_cons-reg"/>
</dbReference>
<dbReference type="PANTHER" id="PTHR10426:SF106">
    <property type="entry name" value="PROTEIN STRICTOSIDINE SYNTHASE-LIKE 3"/>
    <property type="match status" value="1"/>
</dbReference>
<dbReference type="PANTHER" id="PTHR10426">
    <property type="entry name" value="STRICTOSIDINE SYNTHASE-RELATED"/>
    <property type="match status" value="1"/>
</dbReference>
<dbReference type="Pfam" id="PF20067">
    <property type="entry name" value="SSL_N"/>
    <property type="match status" value="1"/>
</dbReference>
<dbReference type="Pfam" id="PF03088">
    <property type="entry name" value="Str_synth"/>
    <property type="match status" value="1"/>
</dbReference>
<dbReference type="SUPFAM" id="SSF63829">
    <property type="entry name" value="Calcium-dependent phosphotriesterase"/>
    <property type="match status" value="1"/>
</dbReference>
<keyword id="KW-0325">Glycoprotein</keyword>
<keyword id="KW-1185">Reference proteome</keyword>
<keyword id="KW-0732">Signal</keyword>
<keyword id="KW-0926">Vacuole</keyword>
<gene>
    <name evidence="4" type="primary">SSL3</name>
    <name evidence="5" type="synonym">SS9</name>
    <name evidence="7" type="ordered locus">At1g08470</name>
    <name evidence="8" type="ORF">T27G7.16</name>
</gene>
<name>SSL3_ARATH</name>
<sequence>MAMSILAKIFLVFAIYCAIDPFSHSSISKFPDFKTYKIDMPPLSSLPKERDRQNLLQNSEIRFLNEVQGPESIAFDPQGRGPYTGVADGRILFWNGTRWTDFAYTSNNRSELCDPKPSLLDYLKDEDICGRPLGLRFDKKNGDLYIADAYLGIMKVGPEGGLATSVTNEADGVPLRFTNDLDIDDEGNVYFTDSSSFFQRRKFMLLIVSGEDSGRVLKYNPKTKETTTLVRNLQFPNGLSLGKDGSFFIFCEGSIGRLRKYWLKGEKAGTSEVVALLHGFPDNIRTNKDGDFWVAVHCHRNIFTHLMAHYPRVRKFFLKLPISVKFQYLLQVGGWPHAVAVKYSEEGKVLKVLEDSKGKVVKAVSEVEEKDGKLWMGSVLMSFIAVYDLP</sequence>